<protein>
    <recommendedName>
        <fullName evidence="1">3-phosphoshikimate 1-carboxyvinyltransferase</fullName>
        <ecNumber evidence="1">2.5.1.19</ecNumber>
    </recommendedName>
    <alternativeName>
        <fullName evidence="1">5-enolpyruvylshikimate-3-phosphate synthase</fullName>
        <shortName evidence="1">EPSP synthase</shortName>
        <shortName evidence="1">EPSPS</shortName>
    </alternativeName>
</protein>
<proteinExistence type="inferred from homology"/>
<feature type="chain" id="PRO_1000012497" description="3-phosphoshikimate 1-carboxyvinyltransferase">
    <location>
        <begin position="1"/>
        <end position="426"/>
    </location>
</feature>
<feature type="active site" description="Proton acceptor" evidence="1">
    <location>
        <position position="312"/>
    </location>
</feature>
<feature type="binding site" evidence="1">
    <location>
        <position position="20"/>
    </location>
    <ligand>
        <name>3-phosphoshikimate</name>
        <dbReference type="ChEBI" id="CHEBI:145989"/>
    </ligand>
</feature>
<feature type="binding site" evidence="1">
    <location>
        <position position="20"/>
    </location>
    <ligand>
        <name>phosphoenolpyruvate</name>
        <dbReference type="ChEBI" id="CHEBI:58702"/>
    </ligand>
</feature>
<feature type="binding site" evidence="1">
    <location>
        <position position="21"/>
    </location>
    <ligand>
        <name>3-phosphoshikimate</name>
        <dbReference type="ChEBI" id="CHEBI:145989"/>
    </ligand>
</feature>
<feature type="binding site" evidence="1">
    <location>
        <position position="25"/>
    </location>
    <ligand>
        <name>3-phosphoshikimate</name>
        <dbReference type="ChEBI" id="CHEBI:145989"/>
    </ligand>
</feature>
<feature type="binding site" evidence="1">
    <location>
        <position position="92"/>
    </location>
    <ligand>
        <name>phosphoenolpyruvate</name>
        <dbReference type="ChEBI" id="CHEBI:58702"/>
    </ligand>
</feature>
<feature type="binding site" evidence="1">
    <location>
        <position position="120"/>
    </location>
    <ligand>
        <name>phosphoenolpyruvate</name>
        <dbReference type="ChEBI" id="CHEBI:58702"/>
    </ligand>
</feature>
<feature type="binding site" evidence="1">
    <location>
        <position position="166"/>
    </location>
    <ligand>
        <name>3-phosphoshikimate</name>
        <dbReference type="ChEBI" id="CHEBI:145989"/>
    </ligand>
</feature>
<feature type="binding site" evidence="1">
    <location>
        <position position="168"/>
    </location>
    <ligand>
        <name>3-phosphoshikimate</name>
        <dbReference type="ChEBI" id="CHEBI:145989"/>
    </ligand>
</feature>
<feature type="binding site" evidence="1">
    <location>
        <position position="168"/>
    </location>
    <ligand>
        <name>phosphoenolpyruvate</name>
        <dbReference type="ChEBI" id="CHEBI:58702"/>
    </ligand>
</feature>
<feature type="binding site" evidence="1">
    <location>
        <position position="312"/>
    </location>
    <ligand>
        <name>3-phosphoshikimate</name>
        <dbReference type="ChEBI" id="CHEBI:145989"/>
    </ligand>
</feature>
<feature type="binding site" evidence="1">
    <location>
        <position position="339"/>
    </location>
    <ligand>
        <name>3-phosphoshikimate</name>
        <dbReference type="ChEBI" id="CHEBI:145989"/>
    </ligand>
</feature>
<feature type="binding site" evidence="1">
    <location>
        <position position="385"/>
    </location>
    <ligand>
        <name>phosphoenolpyruvate</name>
        <dbReference type="ChEBI" id="CHEBI:58702"/>
    </ligand>
</feature>
<organism>
    <name type="scientific">Streptococcus suis (strain 98HAH33)</name>
    <dbReference type="NCBI Taxonomy" id="391296"/>
    <lineage>
        <taxon>Bacteria</taxon>
        <taxon>Bacillati</taxon>
        <taxon>Bacillota</taxon>
        <taxon>Bacilli</taxon>
        <taxon>Lactobacillales</taxon>
        <taxon>Streptococcaceae</taxon>
        <taxon>Streptococcus</taxon>
    </lineage>
</organism>
<accession>A4W069</accession>
<gene>
    <name evidence="1" type="primary">aroA</name>
    <name type="ordered locus">SSU98_0600</name>
</gene>
<dbReference type="EC" id="2.5.1.19" evidence="1"/>
<dbReference type="EMBL" id="CP000408">
    <property type="protein sequence ID" value="ABP91758.1"/>
    <property type="molecule type" value="Genomic_DNA"/>
</dbReference>
<dbReference type="SMR" id="A4W069"/>
<dbReference type="KEGG" id="ssv:SSU98_0600"/>
<dbReference type="HOGENOM" id="CLU_024321_0_1_9"/>
<dbReference type="UniPathway" id="UPA00053">
    <property type="reaction ID" value="UER00089"/>
</dbReference>
<dbReference type="GO" id="GO:0005737">
    <property type="term" value="C:cytoplasm"/>
    <property type="evidence" value="ECO:0007669"/>
    <property type="project" value="UniProtKB-SubCell"/>
</dbReference>
<dbReference type="GO" id="GO:0003866">
    <property type="term" value="F:3-phosphoshikimate 1-carboxyvinyltransferase activity"/>
    <property type="evidence" value="ECO:0007669"/>
    <property type="project" value="UniProtKB-UniRule"/>
</dbReference>
<dbReference type="GO" id="GO:0008652">
    <property type="term" value="P:amino acid biosynthetic process"/>
    <property type="evidence" value="ECO:0007669"/>
    <property type="project" value="UniProtKB-KW"/>
</dbReference>
<dbReference type="GO" id="GO:0009073">
    <property type="term" value="P:aromatic amino acid family biosynthetic process"/>
    <property type="evidence" value="ECO:0007669"/>
    <property type="project" value="UniProtKB-KW"/>
</dbReference>
<dbReference type="GO" id="GO:0009423">
    <property type="term" value="P:chorismate biosynthetic process"/>
    <property type="evidence" value="ECO:0007669"/>
    <property type="project" value="UniProtKB-UniRule"/>
</dbReference>
<dbReference type="CDD" id="cd01556">
    <property type="entry name" value="EPSP_synthase"/>
    <property type="match status" value="1"/>
</dbReference>
<dbReference type="FunFam" id="3.65.10.10:FF:000005">
    <property type="entry name" value="3-phosphoshikimate 1-carboxyvinyltransferase"/>
    <property type="match status" value="1"/>
</dbReference>
<dbReference type="FunFam" id="3.65.10.10:FF:000006">
    <property type="entry name" value="3-phosphoshikimate 1-carboxyvinyltransferase"/>
    <property type="match status" value="1"/>
</dbReference>
<dbReference type="Gene3D" id="3.65.10.10">
    <property type="entry name" value="Enolpyruvate transferase domain"/>
    <property type="match status" value="2"/>
</dbReference>
<dbReference type="HAMAP" id="MF_00210">
    <property type="entry name" value="EPSP_synth"/>
    <property type="match status" value="1"/>
</dbReference>
<dbReference type="InterPro" id="IPR001986">
    <property type="entry name" value="Enolpyruvate_Tfrase_dom"/>
</dbReference>
<dbReference type="InterPro" id="IPR036968">
    <property type="entry name" value="Enolpyruvate_Tfrase_sf"/>
</dbReference>
<dbReference type="InterPro" id="IPR006264">
    <property type="entry name" value="EPSP_synthase"/>
</dbReference>
<dbReference type="InterPro" id="IPR023193">
    <property type="entry name" value="EPSP_synthase_CS"/>
</dbReference>
<dbReference type="InterPro" id="IPR013792">
    <property type="entry name" value="RNA3'P_cycl/enolpyr_Trfase_a/b"/>
</dbReference>
<dbReference type="NCBIfam" id="TIGR01356">
    <property type="entry name" value="aroA"/>
    <property type="match status" value="1"/>
</dbReference>
<dbReference type="PANTHER" id="PTHR21090">
    <property type="entry name" value="AROM/DEHYDROQUINATE SYNTHASE"/>
    <property type="match status" value="1"/>
</dbReference>
<dbReference type="PANTHER" id="PTHR21090:SF5">
    <property type="entry name" value="PENTAFUNCTIONAL AROM POLYPEPTIDE"/>
    <property type="match status" value="1"/>
</dbReference>
<dbReference type="Pfam" id="PF00275">
    <property type="entry name" value="EPSP_synthase"/>
    <property type="match status" value="1"/>
</dbReference>
<dbReference type="PIRSF" id="PIRSF000505">
    <property type="entry name" value="EPSPS"/>
    <property type="match status" value="1"/>
</dbReference>
<dbReference type="SUPFAM" id="SSF55205">
    <property type="entry name" value="EPT/RTPC-like"/>
    <property type="match status" value="1"/>
</dbReference>
<dbReference type="PROSITE" id="PS00104">
    <property type="entry name" value="EPSP_SYNTHASE_1"/>
    <property type="match status" value="1"/>
</dbReference>
<sequence length="426" mass="45928">MKLRRSVEKLKGTIRVPGDKSISHRSIIFGSLAKGVTRFHNILRGEDVLSTMQVFRDLGVKIEDNGDIVEVHGVGFDGLQAPKNDLDMGNSGTSIRLISGVLAGQDFEATMFGDDSLSKRPMDRVTIPLSQMGLKISGQTERDLPPLTIKGNKNLKPIRYQLPVASAQVKSALIFAALQAEGNSVIVKKDLTRNHTEDMIVQFGGQLKFNGKEIRIQGGQEFIAQEITVPGDISSAAFWLVAGLIIPGSKIVLENVGINETRTGILDVIKAMGGKMTLSNIDELAKSATITVETSELKATEIAGELIPRLIDELPIITLLATQAHGTTIICDAEELKVKETDCIQVVADALNSMGATIEPTEDGMIIHGPTALHGAEINTFGDHRIGMMTAIAALLAKDGEVVLERAEAINTSYPAFFEHLNSLMD</sequence>
<evidence type="ECO:0000255" key="1">
    <source>
        <dbReference type="HAMAP-Rule" id="MF_00210"/>
    </source>
</evidence>
<comment type="function">
    <text evidence="1">Catalyzes the transfer of the enolpyruvyl moiety of phosphoenolpyruvate (PEP) to the 5-hydroxyl of shikimate-3-phosphate (S3P) to produce enolpyruvyl shikimate-3-phosphate and inorganic phosphate.</text>
</comment>
<comment type="catalytic activity">
    <reaction evidence="1">
        <text>3-phosphoshikimate + phosphoenolpyruvate = 5-O-(1-carboxyvinyl)-3-phosphoshikimate + phosphate</text>
        <dbReference type="Rhea" id="RHEA:21256"/>
        <dbReference type="ChEBI" id="CHEBI:43474"/>
        <dbReference type="ChEBI" id="CHEBI:57701"/>
        <dbReference type="ChEBI" id="CHEBI:58702"/>
        <dbReference type="ChEBI" id="CHEBI:145989"/>
        <dbReference type="EC" id="2.5.1.19"/>
    </reaction>
    <physiologicalReaction direction="left-to-right" evidence="1">
        <dbReference type="Rhea" id="RHEA:21257"/>
    </physiologicalReaction>
</comment>
<comment type="pathway">
    <text evidence="1">Metabolic intermediate biosynthesis; chorismate biosynthesis; chorismate from D-erythrose 4-phosphate and phosphoenolpyruvate: step 6/7.</text>
</comment>
<comment type="subunit">
    <text evidence="1">Monomer.</text>
</comment>
<comment type="subcellular location">
    <subcellularLocation>
        <location evidence="1">Cytoplasm</location>
    </subcellularLocation>
</comment>
<comment type="similarity">
    <text evidence="1">Belongs to the EPSP synthase family.</text>
</comment>
<keyword id="KW-0028">Amino-acid biosynthesis</keyword>
<keyword id="KW-0057">Aromatic amino acid biosynthesis</keyword>
<keyword id="KW-0963">Cytoplasm</keyword>
<keyword id="KW-0808">Transferase</keyword>
<name>AROA_STRS2</name>
<reference key="1">
    <citation type="journal article" date="2007" name="PLoS ONE">
        <title>A glimpse of streptococcal toxic shock syndrome from comparative genomics of S. suis 2 Chinese isolates.</title>
        <authorList>
            <person name="Chen C."/>
            <person name="Tang J."/>
            <person name="Dong W."/>
            <person name="Wang C."/>
            <person name="Feng Y."/>
            <person name="Wang J."/>
            <person name="Zheng F."/>
            <person name="Pan X."/>
            <person name="Liu D."/>
            <person name="Li M."/>
            <person name="Song Y."/>
            <person name="Zhu X."/>
            <person name="Sun H."/>
            <person name="Feng T."/>
            <person name="Guo Z."/>
            <person name="Ju A."/>
            <person name="Ge J."/>
            <person name="Dong Y."/>
            <person name="Sun W."/>
            <person name="Jiang Y."/>
            <person name="Wang J."/>
            <person name="Yan J."/>
            <person name="Yang H."/>
            <person name="Wang X."/>
            <person name="Gao G.F."/>
            <person name="Yang R."/>
            <person name="Wang J."/>
            <person name="Yu J."/>
        </authorList>
    </citation>
    <scope>NUCLEOTIDE SEQUENCE [LARGE SCALE GENOMIC DNA]</scope>
    <source>
        <strain>98HAH33</strain>
    </source>
</reference>